<evidence type="ECO:0000250" key="1">
    <source>
        <dbReference type="UniProtKB" id="P47158"/>
    </source>
</evidence>
<evidence type="ECO:0000255" key="2"/>
<evidence type="ECO:0000256" key="3">
    <source>
        <dbReference type="SAM" id="MobiDB-lite"/>
    </source>
</evidence>
<evidence type="ECO:0000305" key="4"/>
<keyword id="KW-0496">Mitochondrion</keyword>
<keyword id="KW-1185">Reference proteome</keyword>
<keyword id="KW-0809">Transit peptide</keyword>
<dbReference type="EMBL" id="GG704915">
    <property type="protein sequence ID" value="EAS28121.1"/>
    <property type="molecule type" value="Genomic_DNA"/>
</dbReference>
<dbReference type="RefSeq" id="XP_001239704.1">
    <property type="nucleotide sequence ID" value="XM_001239703.1"/>
</dbReference>
<dbReference type="SMR" id="Q1DK38"/>
<dbReference type="FunCoup" id="Q1DK38">
    <property type="interactions" value="281"/>
</dbReference>
<dbReference type="STRING" id="246410.Q1DK38"/>
<dbReference type="GeneID" id="4559074"/>
<dbReference type="KEGG" id="cim:CIMG_09325"/>
<dbReference type="VEuPathDB" id="FungiDB:CIMG_09325"/>
<dbReference type="InParanoid" id="Q1DK38"/>
<dbReference type="OMA" id="NMLVAND"/>
<dbReference type="OrthoDB" id="191995at2759"/>
<dbReference type="Proteomes" id="UP000001261">
    <property type="component" value="Unassembled WGS sequence"/>
</dbReference>
<dbReference type="GO" id="GO:0005759">
    <property type="term" value="C:mitochondrial matrix"/>
    <property type="evidence" value="ECO:0007669"/>
    <property type="project" value="TreeGrafter"/>
</dbReference>
<dbReference type="GO" id="GO:0016740">
    <property type="term" value="F:transferase activity"/>
    <property type="evidence" value="ECO:0007669"/>
    <property type="project" value="UniProtKB-KW"/>
</dbReference>
<dbReference type="GO" id="GO:0016226">
    <property type="term" value="P:iron-sulfur cluster assembly"/>
    <property type="evidence" value="ECO:0007669"/>
    <property type="project" value="TreeGrafter"/>
</dbReference>
<dbReference type="Gene3D" id="3.30.1360.120">
    <property type="entry name" value="Probable tRNA modification gtpase trme, domain 1"/>
    <property type="match status" value="1"/>
</dbReference>
<dbReference type="InterPro" id="IPR027266">
    <property type="entry name" value="TrmE/GcvT_dom1"/>
</dbReference>
<dbReference type="InterPro" id="IPR045179">
    <property type="entry name" value="YgfZ/GcvT"/>
</dbReference>
<dbReference type="InterPro" id="IPR017703">
    <property type="entry name" value="YgfZ/GcvT_CS"/>
</dbReference>
<dbReference type="NCBIfam" id="TIGR03317">
    <property type="entry name" value="ygfZ_signature"/>
    <property type="match status" value="1"/>
</dbReference>
<dbReference type="PANTHER" id="PTHR22602">
    <property type="entry name" value="TRANSFERASE CAF17, MITOCHONDRIAL-RELATED"/>
    <property type="match status" value="1"/>
</dbReference>
<dbReference type="PANTHER" id="PTHR22602:SF0">
    <property type="entry name" value="TRANSFERASE CAF17, MITOCHONDRIAL-RELATED"/>
    <property type="match status" value="1"/>
</dbReference>
<dbReference type="Pfam" id="PF25455">
    <property type="entry name" value="Beta-barrel_CAF17_C"/>
    <property type="match status" value="1"/>
</dbReference>
<dbReference type="SUPFAM" id="SSF103025">
    <property type="entry name" value="Folate-binding domain"/>
    <property type="match status" value="1"/>
</dbReference>
<sequence>MPPRLRPGSVCSRCHFHRRSLSSTAFLAQKQAERPPPPPEAGHVRLVNRALISLTGADSTSFLQGLITQNVVSAKSRASPTTPFYAGFLNAQGRLLHDTFIYPTLPEENGGNEGMELGYLIEVDKEQVTNLLKHLKKHKLRAKLKFRALDEGERGVWAVWDNAKNWETKDTGDVLREVITCADNRAPAFGYRVLLAGDNLQNLSQPLPGQQASLSTYTLRRILHGIPEGQDELGRESALPMDSNMDIMGGIDFHKGCYLGQELTIRTHHRGVVRKRVLPVQLYNTEDPKPMPSSSGIPVYSPDSQLLLPSAGANITKSSASGKGRSAGKFISRIGNVGLALCRLETMTDISLTGESSQYNPSEEFKISWEANADAGVAEAGEVKVTAFIPPWVKDYILHGGTRQRQTKEDVHRAKSGTEQIEEED</sequence>
<reference key="1">
    <citation type="journal article" date="2009" name="Genome Res.">
        <title>Comparative genomic analyses of the human fungal pathogens Coccidioides and their relatives.</title>
        <authorList>
            <person name="Sharpton T.J."/>
            <person name="Stajich J.E."/>
            <person name="Rounsley S.D."/>
            <person name="Gardner M.J."/>
            <person name="Wortman J.R."/>
            <person name="Jordar V.S."/>
            <person name="Maiti R."/>
            <person name="Kodira C.D."/>
            <person name="Neafsey D.E."/>
            <person name="Zeng Q."/>
            <person name="Hung C.-Y."/>
            <person name="McMahan C."/>
            <person name="Muszewska A."/>
            <person name="Grynberg M."/>
            <person name="Mandel M.A."/>
            <person name="Kellner E.M."/>
            <person name="Barker B.M."/>
            <person name="Galgiani J.N."/>
            <person name="Orbach M.J."/>
            <person name="Kirkland T.N."/>
            <person name="Cole G.T."/>
            <person name="Henn M.R."/>
            <person name="Birren B.W."/>
            <person name="Taylor J.W."/>
        </authorList>
    </citation>
    <scope>NUCLEOTIDE SEQUENCE [LARGE SCALE GENOMIC DNA]</scope>
    <source>
        <strain>RS</strain>
    </source>
</reference>
<reference key="2">
    <citation type="journal article" date="2010" name="Genome Res.">
        <title>Population genomic sequencing of Coccidioides fungi reveals recent hybridization and transposon control.</title>
        <authorList>
            <person name="Neafsey D.E."/>
            <person name="Barker B.M."/>
            <person name="Sharpton T.J."/>
            <person name="Stajich J.E."/>
            <person name="Park D.J."/>
            <person name="Whiston E."/>
            <person name="Hung C.-Y."/>
            <person name="McMahan C."/>
            <person name="White J."/>
            <person name="Sykes S."/>
            <person name="Heiman D."/>
            <person name="Young S."/>
            <person name="Zeng Q."/>
            <person name="Abouelleil A."/>
            <person name="Aftuck L."/>
            <person name="Bessette D."/>
            <person name="Brown A."/>
            <person name="FitzGerald M."/>
            <person name="Lui A."/>
            <person name="Macdonald J.P."/>
            <person name="Priest M."/>
            <person name="Orbach M.J."/>
            <person name="Galgiani J.N."/>
            <person name="Kirkland T.N."/>
            <person name="Cole G.T."/>
            <person name="Birren B.W."/>
            <person name="Henn M.R."/>
            <person name="Taylor J.W."/>
            <person name="Rounsley S.D."/>
        </authorList>
    </citation>
    <scope>GENOME REANNOTATION</scope>
    <source>
        <strain>RS</strain>
    </source>
</reference>
<feature type="transit peptide" description="Mitochondrion" evidence="2">
    <location>
        <begin position="1"/>
        <end position="28"/>
    </location>
</feature>
<feature type="chain" id="PRO_0000301697" description="Iron-sulfur cluster assembly factor IBA57 homolog, mitochondrial">
    <location>
        <begin position="29"/>
        <end position="425"/>
    </location>
</feature>
<feature type="region of interest" description="Disordered" evidence="3">
    <location>
        <begin position="403"/>
        <end position="425"/>
    </location>
</feature>
<gene>
    <name type="primary">CAF17</name>
    <name type="ORF">CIMG_09325</name>
</gene>
<proteinExistence type="inferred from homology"/>
<name>CAF17_COCIM</name>
<accession>Q1DK38</accession>
<accession>A0A0D6K9M4</accession>
<accession>J3K2T4</accession>
<comment type="subcellular location">
    <subcellularLocation>
        <location evidence="1">Mitochondrion matrix</location>
    </subcellularLocation>
</comment>
<comment type="similarity">
    <text evidence="4">Belongs to the GcvT family. CAF17/IBA57 subfamily.</text>
</comment>
<organism>
    <name type="scientific">Coccidioides immitis (strain RS)</name>
    <name type="common">Valley fever fungus</name>
    <dbReference type="NCBI Taxonomy" id="246410"/>
    <lineage>
        <taxon>Eukaryota</taxon>
        <taxon>Fungi</taxon>
        <taxon>Dikarya</taxon>
        <taxon>Ascomycota</taxon>
        <taxon>Pezizomycotina</taxon>
        <taxon>Eurotiomycetes</taxon>
        <taxon>Eurotiomycetidae</taxon>
        <taxon>Onygenales</taxon>
        <taxon>Onygenaceae</taxon>
        <taxon>Coccidioides</taxon>
    </lineage>
</organism>
<protein>
    <recommendedName>
        <fullName>Iron-sulfur cluster assembly factor IBA57 homolog, mitochondrial</fullName>
    </recommendedName>
</protein>